<name>PG181_VACCC</name>
<dbReference type="EMBL" id="M35027">
    <property type="protein sequence ID" value="AAA48185.1"/>
    <property type="molecule type" value="Genomic_DNA"/>
</dbReference>
<dbReference type="PIR" id="H42522">
    <property type="entry name" value="H42522"/>
</dbReference>
<dbReference type="Proteomes" id="UP000008269">
    <property type="component" value="Segment"/>
</dbReference>
<dbReference type="InterPro" id="IPR007032">
    <property type="entry name" value="Poxvirus_A51"/>
</dbReference>
<dbReference type="Pfam" id="PF04948">
    <property type="entry name" value="Pox_A51"/>
    <property type="match status" value="1"/>
</dbReference>
<organism>
    <name type="scientific">Vaccinia virus (strain Copenhagen)</name>
    <name type="common">VACV</name>
    <dbReference type="NCBI Taxonomy" id="10249"/>
    <lineage>
        <taxon>Viruses</taxon>
        <taxon>Varidnaviria</taxon>
        <taxon>Bamfordvirae</taxon>
        <taxon>Nucleocytoviricota</taxon>
        <taxon>Pokkesviricetes</taxon>
        <taxon>Chitovirales</taxon>
        <taxon>Poxviridae</taxon>
        <taxon>Chordopoxvirinae</taxon>
        <taxon>Orthopoxvirus</taxon>
        <taxon>Vaccinia virus</taxon>
    </lineage>
</organism>
<proteinExistence type="evidence at transcript level"/>
<organismHost>
    <name type="scientific">Homo sapiens</name>
    <name type="common">Human</name>
    <dbReference type="NCBI Taxonomy" id="9606"/>
</organismHost>
<protein>
    <recommendedName>
        <fullName>Protein OPG181</fullName>
    </recommendedName>
</protein>
<reference key="1">
    <citation type="journal article" date="1990" name="Virology">
        <title>The complete DNA sequence of vaccinia virus.</title>
        <authorList>
            <person name="Goebel S.J."/>
            <person name="Johnson G.P."/>
            <person name="Perkus M.E."/>
            <person name="Davis S.W."/>
            <person name="Winslow J.P."/>
            <person name="Paoletti E."/>
        </authorList>
    </citation>
    <scope>NUCLEOTIDE SEQUENCE [LARGE SCALE GENOMIC DNA]</scope>
</reference>
<reference key="2">
    <citation type="journal article" date="1990" name="Virology">
        <title>Appendix to 'The complete DNA sequence of vaccinia virus'.</title>
        <authorList>
            <person name="Goebel S.J."/>
            <person name="Johnson G.P."/>
            <person name="Perkus M.E."/>
            <person name="Davis S.W."/>
            <person name="Winslow J.P."/>
            <person name="Paoletti E."/>
        </authorList>
    </citation>
    <scope>NUCLEOTIDE SEQUENCE [LARGE SCALE GENOMIC DNA]</scope>
</reference>
<evidence type="ECO:0000305" key="1"/>
<keyword id="KW-0244">Early protein</keyword>
<keyword id="KW-1185">Reference proteome</keyword>
<gene>
    <name type="primary">OPG181</name>
    <name type="ORF">A51R</name>
</gene>
<sequence>MDGVIVYCLNALVKHGEEINHIKNDFMIKPCCERVCEKVKNVHIGGQSKNNTVIADLPYMDNAVSDVCNSLYKKNVSRISRFANLIKIDDDDKTPTGVYNYFKPKDVIPVIISIGKDKDVCELLISSDISCACVELNSYKVAILPMDVSFFTKGNASLIILLFDFSIDAAPLLRSVTDNNVIISRHQRLHDELPSSNWFKFYISIKSDYCSILYMVVDGSVMHAIADNRTHAIISKNILDNTTINDECRCCYFEPQIRILDRDEMLNGSSCDMNRHCIMMNLPDVGEFGSSMLGKYEPDMIKIALSVAGNLIRNRDYIPGRRGYSYYVYGIASR</sequence>
<comment type="induction">
    <text>Expressed in the early phase of the viral replicative cycle.</text>
</comment>
<comment type="similarity">
    <text evidence="1">Belongs to the orthopoxvirus OPG181 family.</text>
</comment>
<accession>P21069</accession>
<feature type="chain" id="PRO_0000099346" description="Protein OPG181">
    <location>
        <begin position="1"/>
        <end position="334"/>
    </location>
</feature>